<gene>
    <name evidence="1" type="primary">aroC</name>
    <name type="ordered locus">Blon_1598</name>
    <name type="ordered locus">BLIJ_1653</name>
</gene>
<evidence type="ECO:0000255" key="1">
    <source>
        <dbReference type="HAMAP-Rule" id="MF_00300"/>
    </source>
</evidence>
<evidence type="ECO:0000256" key="2">
    <source>
        <dbReference type="SAM" id="MobiDB-lite"/>
    </source>
</evidence>
<evidence type="ECO:0007829" key="3">
    <source>
        <dbReference type="PDB" id="4ECD"/>
    </source>
</evidence>
<protein>
    <recommendedName>
        <fullName evidence="1">Chorismate synthase</fullName>
        <shortName evidence="1">CS</shortName>
        <ecNumber evidence="1">4.2.3.5</ecNumber>
    </recommendedName>
    <alternativeName>
        <fullName evidence="1">5-enolpyruvylshikimate-3-phosphate phospholyase</fullName>
    </alternativeName>
</protein>
<name>AROC_BIFLS</name>
<organism>
    <name type="scientific">Bifidobacterium longum subsp. infantis (strain ATCC 15697 / DSM 20088 / JCM 1222 / NCTC 11817 / S12)</name>
    <dbReference type="NCBI Taxonomy" id="391904"/>
    <lineage>
        <taxon>Bacteria</taxon>
        <taxon>Bacillati</taxon>
        <taxon>Actinomycetota</taxon>
        <taxon>Actinomycetes</taxon>
        <taxon>Bifidobacteriales</taxon>
        <taxon>Bifidobacteriaceae</taxon>
        <taxon>Bifidobacterium</taxon>
    </lineage>
</organism>
<proteinExistence type="evidence at protein level"/>
<feature type="chain" id="PRO_1000132755" description="Chorismate synthase">
    <location>
        <begin position="1"/>
        <end position="395"/>
    </location>
</feature>
<feature type="region of interest" description="Disordered" evidence="2">
    <location>
        <begin position="98"/>
        <end position="120"/>
    </location>
</feature>
<feature type="binding site" evidence="1">
    <location>
        <position position="40"/>
    </location>
    <ligand>
        <name>NADP(+)</name>
        <dbReference type="ChEBI" id="CHEBI:58349"/>
    </ligand>
</feature>
<feature type="binding site" evidence="1">
    <location>
        <position position="46"/>
    </location>
    <ligand>
        <name>NADP(+)</name>
        <dbReference type="ChEBI" id="CHEBI:58349"/>
    </ligand>
</feature>
<feature type="binding site" evidence="1">
    <location>
        <begin position="134"/>
        <end position="136"/>
    </location>
    <ligand>
        <name>FMN</name>
        <dbReference type="ChEBI" id="CHEBI:58210"/>
    </ligand>
</feature>
<feature type="binding site" evidence="1">
    <location>
        <begin position="256"/>
        <end position="257"/>
    </location>
    <ligand>
        <name>FMN</name>
        <dbReference type="ChEBI" id="CHEBI:58210"/>
    </ligand>
</feature>
<feature type="binding site" evidence="1">
    <location>
        <position position="301"/>
    </location>
    <ligand>
        <name>FMN</name>
        <dbReference type="ChEBI" id="CHEBI:58210"/>
    </ligand>
</feature>
<feature type="binding site" evidence="1">
    <location>
        <begin position="316"/>
        <end position="320"/>
    </location>
    <ligand>
        <name>FMN</name>
        <dbReference type="ChEBI" id="CHEBI:58210"/>
    </ligand>
</feature>
<feature type="binding site" evidence="1">
    <location>
        <position position="342"/>
    </location>
    <ligand>
        <name>FMN</name>
        <dbReference type="ChEBI" id="CHEBI:58210"/>
    </ligand>
</feature>
<feature type="strand" evidence="3">
    <location>
        <begin position="3"/>
        <end position="7"/>
    </location>
</feature>
<feature type="strand" evidence="3">
    <location>
        <begin position="12"/>
        <end position="20"/>
    </location>
</feature>
<feature type="helix" evidence="3">
    <location>
        <begin position="30"/>
        <end position="39"/>
    </location>
</feature>
<feature type="strand" evidence="3">
    <location>
        <begin position="57"/>
        <end position="64"/>
    </location>
</feature>
<feature type="strand" evidence="3">
    <location>
        <begin position="73"/>
        <end position="78"/>
    </location>
</feature>
<feature type="helix" evidence="3">
    <location>
        <begin position="141"/>
        <end position="158"/>
    </location>
</feature>
<feature type="strand" evidence="3">
    <location>
        <begin position="161"/>
        <end position="169"/>
    </location>
</feature>
<feature type="strand" evidence="3">
    <location>
        <begin position="176"/>
        <end position="178"/>
    </location>
</feature>
<feature type="helix" evidence="3">
    <location>
        <begin position="183"/>
        <end position="185"/>
    </location>
</feature>
<feature type="helix" evidence="3">
    <location>
        <begin position="186"/>
        <end position="191"/>
    </location>
</feature>
<feature type="helix" evidence="3">
    <location>
        <begin position="199"/>
        <end position="210"/>
    </location>
</feature>
<feature type="helix" evidence="3">
    <location>
        <begin position="216"/>
        <end position="218"/>
    </location>
</feature>
<feature type="strand" evidence="3">
    <location>
        <begin position="221"/>
        <end position="229"/>
    </location>
</feature>
<feature type="strand" evidence="3">
    <location>
        <begin position="237"/>
        <end position="240"/>
    </location>
</feature>
<feature type="helix" evidence="3">
    <location>
        <begin position="244"/>
        <end position="253"/>
    </location>
</feature>
<feature type="strand" evidence="3">
    <location>
        <begin position="258"/>
        <end position="263"/>
    </location>
</feature>
<feature type="turn" evidence="3">
    <location>
        <begin position="264"/>
        <end position="268"/>
    </location>
</feature>
<feature type="strand" evidence="3">
    <location>
        <begin position="298"/>
        <end position="300"/>
    </location>
</feature>
<feature type="strand" evidence="3">
    <location>
        <begin position="309"/>
        <end position="315"/>
    </location>
</feature>
<feature type="helix" evidence="3">
    <location>
        <begin position="348"/>
        <end position="371"/>
    </location>
</feature>
<feature type="helix" evidence="3">
    <location>
        <begin position="376"/>
        <end position="386"/>
    </location>
</feature>
<reference key="1">
    <citation type="journal article" date="2008" name="Proc. Natl. Acad. Sci. U.S.A.">
        <title>The genome sequence of Bifidobacterium longum subsp. infantis reveals adaptations for milk utilization within the infant microbiome.</title>
        <authorList>
            <person name="Sela D.A."/>
            <person name="Chapman J."/>
            <person name="Adeuya A."/>
            <person name="Kim J.H."/>
            <person name="Chen F."/>
            <person name="Whitehead T.R."/>
            <person name="Lapidus A."/>
            <person name="Rokhsar D.S."/>
            <person name="Lebrilla C.B."/>
            <person name="German J.B."/>
            <person name="Price N.P."/>
            <person name="Richardson P.M."/>
            <person name="Mills D.A."/>
        </authorList>
    </citation>
    <scope>NUCLEOTIDE SEQUENCE [LARGE SCALE GENOMIC DNA]</scope>
    <source>
        <strain>ATCC 15697 / DSM 20088 / JCM 1222 / NCTC 11817 / S12</strain>
    </source>
</reference>
<reference key="2">
    <citation type="journal article" date="2011" name="Nature">
        <title>Bifidobacteria can protect from enteropathogenic infection through production of acetate.</title>
        <authorList>
            <person name="Fukuda S."/>
            <person name="Toh H."/>
            <person name="Hase K."/>
            <person name="Oshima K."/>
            <person name="Nakanishi Y."/>
            <person name="Yoshimura K."/>
            <person name="Tobe T."/>
            <person name="Clarke J.M."/>
            <person name="Topping D.L."/>
            <person name="Suzuki T."/>
            <person name="Taylor T.D."/>
            <person name="Itoh K."/>
            <person name="Kikuchi J."/>
            <person name="Morita H."/>
            <person name="Hattori M."/>
            <person name="Ohno H."/>
        </authorList>
    </citation>
    <scope>NUCLEOTIDE SEQUENCE [LARGE SCALE GENOMIC DNA]</scope>
    <source>
        <strain>ATCC 15697 / DSM 20088 / JCM 1222 / NCTC 11817 / S12</strain>
    </source>
</reference>
<comment type="function">
    <text evidence="1">Catalyzes the anti-1,4-elimination of the C-3 phosphate and the C-6 proR hydrogen from 5-enolpyruvylshikimate-3-phosphate (EPSP) to yield chorismate, which is the branch point compound that serves as the starting substrate for the three terminal pathways of aromatic amino acid biosynthesis. This reaction introduces a second double bond into the aromatic ring system.</text>
</comment>
<comment type="catalytic activity">
    <reaction evidence="1">
        <text>5-O-(1-carboxyvinyl)-3-phosphoshikimate = chorismate + phosphate</text>
        <dbReference type="Rhea" id="RHEA:21020"/>
        <dbReference type="ChEBI" id="CHEBI:29748"/>
        <dbReference type="ChEBI" id="CHEBI:43474"/>
        <dbReference type="ChEBI" id="CHEBI:57701"/>
        <dbReference type="EC" id="4.2.3.5"/>
    </reaction>
</comment>
<comment type="cofactor">
    <cofactor evidence="1">
        <name>FMNH2</name>
        <dbReference type="ChEBI" id="CHEBI:57618"/>
    </cofactor>
    <text evidence="1">Reduced FMN (FMNH(2)).</text>
</comment>
<comment type="pathway">
    <text evidence="1">Metabolic intermediate biosynthesis; chorismate biosynthesis; chorismate from D-erythrose 4-phosphate and phosphoenolpyruvate: step 7/7.</text>
</comment>
<comment type="subunit">
    <text evidence="1">Homotetramer.</text>
</comment>
<comment type="similarity">
    <text evidence="1">Belongs to the chorismate synthase family.</text>
</comment>
<dbReference type="EC" id="4.2.3.5" evidence="1"/>
<dbReference type="EMBL" id="CP001095">
    <property type="protein sequence ID" value="ACJ52677.1"/>
    <property type="molecule type" value="Genomic_DNA"/>
</dbReference>
<dbReference type="EMBL" id="AP010889">
    <property type="protein sequence ID" value="BAJ69235.1"/>
    <property type="molecule type" value="Genomic_DNA"/>
</dbReference>
<dbReference type="RefSeq" id="WP_012577913.1">
    <property type="nucleotide sequence ID" value="NC_011593.1"/>
</dbReference>
<dbReference type="PDB" id="4ECD">
    <property type="method" value="X-ray"/>
    <property type="resolution" value="2.50 A"/>
    <property type="chains" value="A/B=1-395"/>
</dbReference>
<dbReference type="PDBsum" id="4ECD"/>
<dbReference type="SMR" id="B7GS97"/>
<dbReference type="KEGG" id="bln:Blon_1598"/>
<dbReference type="KEGG" id="blon:BLIJ_1653"/>
<dbReference type="PATRIC" id="fig|391904.8.peg.1667"/>
<dbReference type="HOGENOM" id="CLU_034547_2_0_11"/>
<dbReference type="UniPathway" id="UPA00053">
    <property type="reaction ID" value="UER00090"/>
</dbReference>
<dbReference type="EvolutionaryTrace" id="B7GS97"/>
<dbReference type="Proteomes" id="UP000001360">
    <property type="component" value="Chromosome"/>
</dbReference>
<dbReference type="GO" id="GO:0005829">
    <property type="term" value="C:cytosol"/>
    <property type="evidence" value="ECO:0007669"/>
    <property type="project" value="TreeGrafter"/>
</dbReference>
<dbReference type="GO" id="GO:0004107">
    <property type="term" value="F:chorismate synthase activity"/>
    <property type="evidence" value="ECO:0007669"/>
    <property type="project" value="UniProtKB-UniRule"/>
</dbReference>
<dbReference type="GO" id="GO:0010181">
    <property type="term" value="F:FMN binding"/>
    <property type="evidence" value="ECO:0007669"/>
    <property type="project" value="TreeGrafter"/>
</dbReference>
<dbReference type="GO" id="GO:0008652">
    <property type="term" value="P:amino acid biosynthetic process"/>
    <property type="evidence" value="ECO:0007669"/>
    <property type="project" value="UniProtKB-KW"/>
</dbReference>
<dbReference type="GO" id="GO:0009073">
    <property type="term" value="P:aromatic amino acid family biosynthetic process"/>
    <property type="evidence" value="ECO:0007669"/>
    <property type="project" value="UniProtKB-KW"/>
</dbReference>
<dbReference type="GO" id="GO:0009423">
    <property type="term" value="P:chorismate biosynthetic process"/>
    <property type="evidence" value="ECO:0007669"/>
    <property type="project" value="UniProtKB-UniRule"/>
</dbReference>
<dbReference type="CDD" id="cd07304">
    <property type="entry name" value="Chorismate_synthase"/>
    <property type="match status" value="1"/>
</dbReference>
<dbReference type="FunFam" id="3.60.150.10:FF:000002">
    <property type="entry name" value="Chorismate synthase"/>
    <property type="match status" value="1"/>
</dbReference>
<dbReference type="Gene3D" id="3.60.150.10">
    <property type="entry name" value="Chorismate synthase AroC"/>
    <property type="match status" value="1"/>
</dbReference>
<dbReference type="HAMAP" id="MF_00300">
    <property type="entry name" value="Chorismate_synth"/>
    <property type="match status" value="1"/>
</dbReference>
<dbReference type="InterPro" id="IPR000453">
    <property type="entry name" value="Chorismate_synth"/>
</dbReference>
<dbReference type="InterPro" id="IPR035904">
    <property type="entry name" value="Chorismate_synth_AroC_sf"/>
</dbReference>
<dbReference type="InterPro" id="IPR020541">
    <property type="entry name" value="Chorismate_synthase_CS"/>
</dbReference>
<dbReference type="NCBIfam" id="TIGR00033">
    <property type="entry name" value="aroC"/>
    <property type="match status" value="1"/>
</dbReference>
<dbReference type="NCBIfam" id="NF003793">
    <property type="entry name" value="PRK05382.1"/>
    <property type="match status" value="1"/>
</dbReference>
<dbReference type="PANTHER" id="PTHR21085">
    <property type="entry name" value="CHORISMATE SYNTHASE"/>
    <property type="match status" value="1"/>
</dbReference>
<dbReference type="PANTHER" id="PTHR21085:SF0">
    <property type="entry name" value="CHORISMATE SYNTHASE"/>
    <property type="match status" value="1"/>
</dbReference>
<dbReference type="Pfam" id="PF01264">
    <property type="entry name" value="Chorismate_synt"/>
    <property type="match status" value="1"/>
</dbReference>
<dbReference type="PIRSF" id="PIRSF001456">
    <property type="entry name" value="Chorismate_synth"/>
    <property type="match status" value="1"/>
</dbReference>
<dbReference type="SUPFAM" id="SSF103263">
    <property type="entry name" value="Chorismate synthase, AroC"/>
    <property type="match status" value="1"/>
</dbReference>
<dbReference type="PROSITE" id="PS00787">
    <property type="entry name" value="CHORISMATE_SYNTHASE_1"/>
    <property type="match status" value="1"/>
</dbReference>
<dbReference type="PROSITE" id="PS00789">
    <property type="entry name" value="CHORISMATE_SYNTHASE_3"/>
    <property type="match status" value="1"/>
</dbReference>
<keyword id="KW-0002">3D-structure</keyword>
<keyword id="KW-0028">Amino-acid biosynthesis</keyword>
<keyword id="KW-0057">Aromatic amino acid biosynthesis</keyword>
<keyword id="KW-0274">FAD</keyword>
<keyword id="KW-0285">Flavoprotein</keyword>
<keyword id="KW-0288">FMN</keyword>
<keyword id="KW-0456">Lyase</keyword>
<keyword id="KW-0521">NADP</keyword>
<sequence>MLRWQTAGESHGEALVAMIEGLPAGVRISTDDIVSALARRRLGYGRGARMKFEQDKVRLLTGVRHGLTLGSPVAIEIANTEWPKWTEVMSADALDHDLPREGRNAPLSRPRPGHADLTGMRKYGFDDARPVLERSSARETASRVALGEVAKQFLDQAFGIRTVAHVVALGGVQTNPDLPLPTPDDLEALDASPVRTLDKEAEVRIIERINEAKKAADTLGGVIEVLAYGVPAGIGTYVESDRRLDAALASAIMGIQAFKGVEIGDGFLAASRPGSQAHDEIVVNADGRIDRLSNRAGGIEGGMSNGQVIRVRGAMKPIPSIPKALRTVDVLTGESAQAINQRSDSTAVPAASVVAEAMVRLTLAKYALDKFGGDSVAETRRNLESYLASWPEHMR</sequence>
<accession>B7GS97</accession>
<accession>E8ML08</accession>